<proteinExistence type="inferred from homology"/>
<name>Y452_BUCAI</name>
<protein>
    <recommendedName>
        <fullName>Uncharacterized MscS family protein BU452</fullName>
    </recommendedName>
</protein>
<evidence type="ECO:0000255" key="1"/>
<evidence type="ECO:0000305" key="2"/>
<organism>
    <name type="scientific">Buchnera aphidicola subsp. Acyrthosiphon pisum (strain APS)</name>
    <name type="common">Acyrthosiphon pisum symbiotic bacterium</name>
    <dbReference type="NCBI Taxonomy" id="107806"/>
    <lineage>
        <taxon>Bacteria</taxon>
        <taxon>Pseudomonadati</taxon>
        <taxon>Pseudomonadota</taxon>
        <taxon>Gammaproteobacteria</taxon>
        <taxon>Enterobacterales</taxon>
        <taxon>Erwiniaceae</taxon>
        <taxon>Buchnera</taxon>
    </lineage>
</organism>
<sequence>MLFIKIEIIAKTLLIINKKYTEIKMDELNVVNNINHAGTWLIRNQELLLRYTINLTSAIIILVVGMFISKIISNGANQVLITRNIDATIAGFLSALMRYIIITFTFIAALGRIGVQTTSVIAILGAAGMAIGLALQGSLSNFAAGVLLVTLRPLKTEEYVDLGSVSGTVLNIHIFYTTLRTLDGKIVVVPNNKIISGNIINYSREPARRNEFIISVSYNSDIDLVIKILRSVIEKEERVIKDKDIIVGLSELAPSSLNFIVRCWSKNHDLNTVYWDLMAKFKKELDKNNINIPFPQLDVHVYKKK</sequence>
<gene>
    <name type="ordered locus">BU452</name>
</gene>
<comment type="subcellular location">
    <subcellularLocation>
        <location evidence="2">Cell membrane</location>
        <topology evidence="2">Multi-pass membrane protein</topology>
    </subcellularLocation>
</comment>
<comment type="similarity">
    <text evidence="2">Belongs to the MscS (TC 1.A.23) family.</text>
</comment>
<keyword id="KW-1003">Cell membrane</keyword>
<keyword id="KW-0472">Membrane</keyword>
<keyword id="KW-1185">Reference proteome</keyword>
<keyword id="KW-0812">Transmembrane</keyword>
<keyword id="KW-1133">Transmembrane helix</keyword>
<feature type="chain" id="PRO_0000110246" description="Uncharacterized MscS family protein BU452">
    <location>
        <begin position="1"/>
        <end position="305"/>
    </location>
</feature>
<feature type="transmembrane region" description="Helical" evidence="1">
    <location>
        <begin position="52"/>
        <end position="72"/>
    </location>
</feature>
<feature type="transmembrane region" description="Helical" evidence="1">
    <location>
        <begin position="89"/>
        <end position="109"/>
    </location>
</feature>
<feature type="transmembrane region" description="Helical" evidence="1">
    <location>
        <begin position="120"/>
        <end position="140"/>
    </location>
</feature>
<accession>P57527</accession>
<reference key="1">
    <citation type="journal article" date="2000" name="Nature">
        <title>Genome sequence of the endocellular bacterial symbiont of aphids Buchnera sp. APS.</title>
        <authorList>
            <person name="Shigenobu S."/>
            <person name="Watanabe H."/>
            <person name="Hattori M."/>
            <person name="Sakaki Y."/>
            <person name="Ishikawa H."/>
        </authorList>
    </citation>
    <scope>NUCLEOTIDE SEQUENCE [LARGE SCALE GENOMIC DNA]</scope>
    <source>
        <strain>APS</strain>
    </source>
</reference>
<dbReference type="EMBL" id="BA000003">
    <property type="protein sequence ID" value="BAB13150.1"/>
    <property type="molecule type" value="Genomic_DNA"/>
</dbReference>
<dbReference type="RefSeq" id="NP_240264.2">
    <property type="nucleotide sequence ID" value="NC_002528.1"/>
</dbReference>
<dbReference type="SMR" id="P57527"/>
<dbReference type="STRING" id="563178.BUAP5A_445"/>
<dbReference type="EnsemblBacteria" id="BAB13150">
    <property type="protein sequence ID" value="BAB13150"/>
    <property type="gene ID" value="BAB13150"/>
</dbReference>
<dbReference type="KEGG" id="buc:BU452"/>
<dbReference type="PATRIC" id="fig|107806.10.peg.462"/>
<dbReference type="eggNOG" id="COG0668">
    <property type="taxonomic scope" value="Bacteria"/>
</dbReference>
<dbReference type="HOGENOM" id="CLU_037945_1_1_6"/>
<dbReference type="Proteomes" id="UP000001806">
    <property type="component" value="Chromosome"/>
</dbReference>
<dbReference type="GO" id="GO:0005886">
    <property type="term" value="C:plasma membrane"/>
    <property type="evidence" value="ECO:0007669"/>
    <property type="project" value="UniProtKB-SubCell"/>
</dbReference>
<dbReference type="GO" id="GO:0008381">
    <property type="term" value="F:mechanosensitive monoatomic ion channel activity"/>
    <property type="evidence" value="ECO:0007669"/>
    <property type="project" value="InterPro"/>
</dbReference>
<dbReference type="Gene3D" id="1.10.287.1260">
    <property type="match status" value="1"/>
</dbReference>
<dbReference type="Gene3D" id="2.30.30.60">
    <property type="match status" value="1"/>
</dbReference>
<dbReference type="Gene3D" id="3.30.70.100">
    <property type="match status" value="1"/>
</dbReference>
<dbReference type="InterPro" id="IPR010920">
    <property type="entry name" value="LSM_dom_sf"/>
</dbReference>
<dbReference type="InterPro" id="IPR049142">
    <property type="entry name" value="MS_channel_1st"/>
</dbReference>
<dbReference type="InterPro" id="IPR049278">
    <property type="entry name" value="MS_channel_C"/>
</dbReference>
<dbReference type="InterPro" id="IPR008910">
    <property type="entry name" value="MSC_TM_helix"/>
</dbReference>
<dbReference type="InterPro" id="IPR045275">
    <property type="entry name" value="MscS_archaea/bacteria_type"/>
</dbReference>
<dbReference type="InterPro" id="IPR023408">
    <property type="entry name" value="MscS_beta-dom_sf"/>
</dbReference>
<dbReference type="InterPro" id="IPR006685">
    <property type="entry name" value="MscS_channel_2nd"/>
</dbReference>
<dbReference type="InterPro" id="IPR011066">
    <property type="entry name" value="MscS_channel_C_sf"/>
</dbReference>
<dbReference type="InterPro" id="IPR006686">
    <property type="entry name" value="MscS_channel_CS"/>
</dbReference>
<dbReference type="InterPro" id="IPR011014">
    <property type="entry name" value="MscS_channel_TM-2"/>
</dbReference>
<dbReference type="NCBIfam" id="NF007662">
    <property type="entry name" value="PRK10334.1"/>
    <property type="match status" value="1"/>
</dbReference>
<dbReference type="PANTHER" id="PTHR30221">
    <property type="entry name" value="SMALL-CONDUCTANCE MECHANOSENSITIVE CHANNEL"/>
    <property type="match status" value="1"/>
</dbReference>
<dbReference type="PANTHER" id="PTHR30221:SF1">
    <property type="entry name" value="SMALL-CONDUCTANCE MECHANOSENSITIVE CHANNEL"/>
    <property type="match status" value="1"/>
</dbReference>
<dbReference type="Pfam" id="PF21088">
    <property type="entry name" value="MS_channel_1st"/>
    <property type="match status" value="1"/>
</dbReference>
<dbReference type="Pfam" id="PF05552">
    <property type="entry name" value="MS_channel_1st_1"/>
    <property type="match status" value="1"/>
</dbReference>
<dbReference type="Pfam" id="PF00924">
    <property type="entry name" value="MS_channel_2nd"/>
    <property type="match status" value="1"/>
</dbReference>
<dbReference type="Pfam" id="PF21082">
    <property type="entry name" value="MS_channel_3rd"/>
    <property type="match status" value="1"/>
</dbReference>
<dbReference type="SUPFAM" id="SSF82689">
    <property type="entry name" value="Mechanosensitive channel protein MscS (YggB), C-terminal domain"/>
    <property type="match status" value="1"/>
</dbReference>
<dbReference type="SUPFAM" id="SSF82861">
    <property type="entry name" value="Mechanosensitive channel protein MscS (YggB), transmembrane region"/>
    <property type="match status" value="1"/>
</dbReference>
<dbReference type="SUPFAM" id="SSF50182">
    <property type="entry name" value="Sm-like ribonucleoproteins"/>
    <property type="match status" value="1"/>
</dbReference>
<dbReference type="PROSITE" id="PS01246">
    <property type="entry name" value="UPF0003"/>
    <property type="match status" value="1"/>
</dbReference>